<dbReference type="GO" id="GO:0005576">
    <property type="term" value="C:extracellular region"/>
    <property type="evidence" value="ECO:0007669"/>
    <property type="project" value="UniProtKB-SubCell"/>
</dbReference>
<dbReference type="GO" id="GO:0006952">
    <property type="term" value="P:defense response"/>
    <property type="evidence" value="ECO:0007669"/>
    <property type="project" value="UniProtKB-KW"/>
</dbReference>
<sequence length="9" mass="884">AGLLDILGL</sequence>
<feature type="peptide" id="PRO_0000043837" description="Rubellidin-4.2/4.3">
    <location>
        <begin position="1"/>
        <end position="9"/>
    </location>
</feature>
<feature type="modified residue" description="Leucine amide" evidence="1">
    <location>
        <position position="9"/>
    </location>
</feature>
<comment type="function">
    <text>Shows neither neuropeptide activity nor antibiotic activity.</text>
</comment>
<comment type="subcellular location">
    <subcellularLocation>
        <location>Secreted</location>
    </subcellularLocation>
</comment>
<comment type="tissue specificity">
    <text>Expressed by the skin dorsal glands.</text>
</comment>
<comment type="PTM">
    <text>Rubellidin 4.2 seems to differ from Rubellidin 4.3 by its C-terminal amidation.</text>
</comment>
<comment type="mass spectrometry" mass="883.0" method="FAB" evidence="1"/>
<protein>
    <recommendedName>
        <fullName>Rubellidin-4.2/4.3</fullName>
    </recommendedName>
</protein>
<name>RBE42_LITRU</name>
<reference key="1">
    <citation type="journal article" date="1996" name="Aust. J. Chem.">
        <title>The structure of new peptides from the Australin red tree frog 'Litoria rubella'. The skin peptide profile as a probe for the study of evolutionary trends of amphibians.</title>
        <authorList>
            <person name="Steinborner S.T."/>
            <person name="Wabnitz P.A."/>
            <person name="Waugh R.J."/>
            <person name="Bowie J.H."/>
            <person name="Gao C."/>
            <person name="Tyler M.J."/>
            <person name="Wallace J.C."/>
        </authorList>
    </citation>
    <scope>PROTEIN SEQUENCE</scope>
    <scope>AMIDATION AT LEU-9</scope>
    <scope>MASS SPECTROMETRY</scope>
    <source>
        <tissue>Skin secretion</tissue>
    </source>
</reference>
<reference key="2">
    <citation type="journal article" date="1999" name="Aust. J. Chem.">
        <title>Peptides from the skin glands of the Australian buzzing tree frog Litori electrica. Comparison with the skin peptides from Litoria rubella.</title>
        <authorList>
            <person name="Wabnitz P.A."/>
            <person name="Bowie J.H."/>
            <person name="Tyler M.J."/>
            <person name="Wallace J.C."/>
        </authorList>
    </citation>
    <scope>PROTEIN SEQUENCE</scope>
    <source>
        <tissue>Skin secretion</tissue>
    </source>
</reference>
<organism>
    <name type="scientific">Litoria rubella</name>
    <name type="common">Desert tree frog</name>
    <name type="synonym">Hyla rubella</name>
    <dbReference type="NCBI Taxonomy" id="104895"/>
    <lineage>
        <taxon>Eukaryota</taxon>
        <taxon>Metazoa</taxon>
        <taxon>Chordata</taxon>
        <taxon>Craniata</taxon>
        <taxon>Vertebrata</taxon>
        <taxon>Euteleostomi</taxon>
        <taxon>Amphibia</taxon>
        <taxon>Batrachia</taxon>
        <taxon>Anura</taxon>
        <taxon>Neobatrachia</taxon>
        <taxon>Hyloidea</taxon>
        <taxon>Hylidae</taxon>
        <taxon>Pelodryadinae</taxon>
        <taxon>Litoria</taxon>
    </lineage>
</organism>
<evidence type="ECO:0000269" key="1">
    <source ref="1"/>
</evidence>
<proteinExistence type="evidence at protein level"/>
<accession>P82075</accession>
<accession>P82093</accession>
<keyword id="KW-0027">Amidation</keyword>
<keyword id="KW-0878">Amphibian defense peptide</keyword>
<keyword id="KW-0903">Direct protein sequencing</keyword>
<keyword id="KW-0964">Secreted</keyword>